<proteinExistence type="inferred from homology"/>
<organism>
    <name type="scientific">Coffea arabica</name>
    <name type="common">Arabian coffee</name>
    <dbReference type="NCBI Taxonomy" id="13443"/>
    <lineage>
        <taxon>Eukaryota</taxon>
        <taxon>Viridiplantae</taxon>
        <taxon>Streptophyta</taxon>
        <taxon>Embryophyta</taxon>
        <taxon>Tracheophyta</taxon>
        <taxon>Spermatophyta</taxon>
        <taxon>Magnoliopsida</taxon>
        <taxon>eudicotyledons</taxon>
        <taxon>Gunneridae</taxon>
        <taxon>Pentapetalae</taxon>
        <taxon>asterids</taxon>
        <taxon>lamiids</taxon>
        <taxon>Gentianales</taxon>
        <taxon>Rubiaceae</taxon>
        <taxon>Ixoroideae</taxon>
        <taxon>Gardenieae complex</taxon>
        <taxon>Bertiereae - Coffeeae clade</taxon>
        <taxon>Coffeeae</taxon>
        <taxon>Coffea</taxon>
    </lineage>
</organism>
<reference key="1">
    <citation type="journal article" date="2007" name="Plant Biotechnol. J.">
        <title>The complete nucleotide sequence of the coffee (Coffea arabica L.) chloroplast genome: organization and implications for biotechnology and phylogenetic relationships amongst angiosperms.</title>
        <authorList>
            <person name="Samson N."/>
            <person name="Bausher M.G."/>
            <person name="Lee S.-B."/>
            <person name="Jansen R.K."/>
            <person name="Daniell H."/>
        </authorList>
    </citation>
    <scope>NUCLEOTIDE SEQUENCE [LARGE SCALE GENOMIC DNA]</scope>
</reference>
<evidence type="ECO:0000255" key="1">
    <source>
        <dbReference type="HAMAP-Rule" id="MF_00251"/>
    </source>
</evidence>
<evidence type="ECO:0000305" key="2"/>
<name>RK36_COFAR</name>
<gene>
    <name evidence="1" type="primary">rpl36</name>
</gene>
<keyword id="KW-0150">Chloroplast</keyword>
<keyword id="KW-0934">Plastid</keyword>
<keyword id="KW-1185">Reference proteome</keyword>
<keyword id="KW-0687">Ribonucleoprotein</keyword>
<keyword id="KW-0689">Ribosomal protein</keyword>
<dbReference type="EMBL" id="EF044213">
    <property type="protein sequence ID" value="ABJ89712.1"/>
    <property type="molecule type" value="Genomic_DNA"/>
</dbReference>
<dbReference type="RefSeq" id="YP_817516.1">
    <property type="nucleotide sequence ID" value="NC_008535.1"/>
</dbReference>
<dbReference type="SMR" id="A0A369"/>
<dbReference type="GeneID" id="4421762"/>
<dbReference type="Proteomes" id="UP000515148">
    <property type="component" value="Chloroplast Pltd"/>
</dbReference>
<dbReference type="GO" id="GO:0009507">
    <property type="term" value="C:chloroplast"/>
    <property type="evidence" value="ECO:0007669"/>
    <property type="project" value="UniProtKB-SubCell"/>
</dbReference>
<dbReference type="GO" id="GO:1990904">
    <property type="term" value="C:ribonucleoprotein complex"/>
    <property type="evidence" value="ECO:0007669"/>
    <property type="project" value="UniProtKB-KW"/>
</dbReference>
<dbReference type="GO" id="GO:0005840">
    <property type="term" value="C:ribosome"/>
    <property type="evidence" value="ECO:0007669"/>
    <property type="project" value="UniProtKB-KW"/>
</dbReference>
<dbReference type="GO" id="GO:0003735">
    <property type="term" value="F:structural constituent of ribosome"/>
    <property type="evidence" value="ECO:0007669"/>
    <property type="project" value="InterPro"/>
</dbReference>
<dbReference type="GO" id="GO:0006412">
    <property type="term" value="P:translation"/>
    <property type="evidence" value="ECO:0007669"/>
    <property type="project" value="UniProtKB-UniRule"/>
</dbReference>
<dbReference type="HAMAP" id="MF_00251">
    <property type="entry name" value="Ribosomal_bL36"/>
    <property type="match status" value="1"/>
</dbReference>
<dbReference type="InterPro" id="IPR000473">
    <property type="entry name" value="Ribosomal_bL36"/>
</dbReference>
<dbReference type="InterPro" id="IPR035977">
    <property type="entry name" value="Ribosomal_bL36_sp"/>
</dbReference>
<dbReference type="NCBIfam" id="TIGR01022">
    <property type="entry name" value="rpmJ_bact"/>
    <property type="match status" value="1"/>
</dbReference>
<dbReference type="PANTHER" id="PTHR42888">
    <property type="entry name" value="50S RIBOSOMAL PROTEIN L36, CHLOROPLASTIC"/>
    <property type="match status" value="1"/>
</dbReference>
<dbReference type="PANTHER" id="PTHR42888:SF1">
    <property type="entry name" value="LARGE RIBOSOMAL SUBUNIT PROTEIN BL36C"/>
    <property type="match status" value="1"/>
</dbReference>
<dbReference type="Pfam" id="PF00444">
    <property type="entry name" value="Ribosomal_L36"/>
    <property type="match status" value="1"/>
</dbReference>
<dbReference type="SUPFAM" id="SSF57840">
    <property type="entry name" value="Ribosomal protein L36"/>
    <property type="match status" value="1"/>
</dbReference>
<dbReference type="PROSITE" id="PS00828">
    <property type="entry name" value="RIBOSOMAL_L36"/>
    <property type="match status" value="1"/>
</dbReference>
<protein>
    <recommendedName>
        <fullName evidence="1">Large ribosomal subunit protein bL36c</fullName>
    </recommendedName>
    <alternativeName>
        <fullName evidence="2">50S ribosomal protein L36, chloroplastic</fullName>
    </alternativeName>
</protein>
<sequence length="37" mass="4446">MKIRASVRKICDKCRLIRRRGRIIVICSNPRHKQRQG</sequence>
<accession>A0A369</accession>
<feature type="chain" id="PRO_0000276812" description="Large ribosomal subunit protein bL36c">
    <location>
        <begin position="1"/>
        <end position="37"/>
    </location>
</feature>
<comment type="subcellular location">
    <subcellularLocation>
        <location>Plastid</location>
        <location>Chloroplast</location>
    </subcellularLocation>
</comment>
<comment type="similarity">
    <text evidence="1">Belongs to the bacterial ribosomal protein bL36 family.</text>
</comment>
<geneLocation type="chloroplast"/>